<proteinExistence type="evidence at protein level"/>
<keyword id="KW-0975">Bacterial flagellum</keyword>
<keyword id="KW-0574">Periplasm</keyword>
<gene>
    <name type="primary">flaAL</name>
    <name type="ordered locus">BHWA1_02338</name>
</gene>
<reference key="1">
    <citation type="journal article" date="2009" name="Vet. Microbiol.">
        <title>A reverse vaccinology approach to swine dysentery vaccine development.</title>
        <authorList>
            <person name="Song Y."/>
            <person name="La T."/>
            <person name="Phillips N.D."/>
            <person name="Bellgard M.I."/>
            <person name="Hampson D.J."/>
        </authorList>
    </citation>
    <scope>NUCLEOTIDE SEQUENCE [GENOMIC DNA]</scope>
    <scope>BIOTECHNOLOGY</scope>
</reference>
<reference key="2">
    <citation type="journal article" date="2009" name="PLoS ONE">
        <title>Genome sequence of the pathogenic intestinal spirochete Brachyspira hyodysenteriae reveals adaptations to its lifestyle in the porcine large intestine.</title>
        <authorList>
            <person name="Bellgard M.I."/>
            <person name="Wanchanthuek P."/>
            <person name="La T."/>
            <person name="Ryan K."/>
            <person name="Moolhuijzen P."/>
            <person name="Albertyn Z."/>
            <person name="Shaban B."/>
            <person name="Motro Y."/>
            <person name="Dunn D.S."/>
            <person name="Schibeci D."/>
            <person name="Hunter A."/>
            <person name="Barrero R."/>
            <person name="Phillips N.D."/>
            <person name="Hampson D.J."/>
        </authorList>
    </citation>
    <scope>NUCLEOTIDE SEQUENCE [LARGE SCALE GENOMIC DNA]</scope>
    <source>
        <strain>ATCC 49526 / WA1</strain>
    </source>
</reference>
<evidence type="ECO:0000256" key="1">
    <source>
        <dbReference type="SAM" id="MobiDB-lite"/>
    </source>
</evidence>
<evidence type="ECO:0000269" key="2">
    <source>
    </source>
</evidence>
<evidence type="ECO:0000305" key="3"/>
<accession>C0QWY9</accession>
<accession>C4MGG5</accession>
<organism>
    <name type="scientific">Brachyspira hyodysenteriae (strain ATCC 49526 / WA1)</name>
    <dbReference type="NCBI Taxonomy" id="565034"/>
    <lineage>
        <taxon>Bacteria</taxon>
        <taxon>Pseudomonadati</taxon>
        <taxon>Spirochaetota</taxon>
        <taxon>Spirochaetia</taxon>
        <taxon>Brachyspirales</taxon>
        <taxon>Brachyspiraceae</taxon>
        <taxon>Brachyspira</taxon>
    </lineage>
</organism>
<protein>
    <recommendedName>
        <fullName>Putative flagellar filament outer layer-like protein</fullName>
    </recommendedName>
    <alternativeName>
        <fullName>P-H42</fullName>
    </alternativeName>
</protein>
<feature type="chain" id="PRO_0000380706" description="Putative flagellar filament outer layer-like protein">
    <location>
        <begin position="1"/>
        <end position="216"/>
    </location>
</feature>
<feature type="region of interest" description="Disordered" evidence="1">
    <location>
        <begin position="1"/>
        <end position="22"/>
    </location>
</feature>
<feature type="compositionally biased region" description="Low complexity" evidence="1">
    <location>
        <begin position="8"/>
        <end position="22"/>
    </location>
</feature>
<name>FLAAL_BRAHW</name>
<sequence length="216" mass="24763">MFAQDAAQTGEQTTQNQGENGNNFVTEAITNYLIDDFEFANTWQASMPRDYGVVSIIRREGGPADVVAEGAENNKYILGAKVEYFRTGYPWFSVTPPRPVKIPGYTKELSVWVAGRNHNNRMSFYVYDVNGKPQAVGNEALNFMGWKNITVQIPANIRQEEFRGQVEQGISFMGIHVKVDPRDSYGKYYIYFDQLMAKTDMYLETYREEDDPLDTW</sequence>
<dbReference type="EMBL" id="EU555169">
    <property type="protein sequence ID" value="ACD74839.1"/>
    <property type="status" value="ALT_INIT"/>
    <property type="molecule type" value="Genomic_DNA"/>
</dbReference>
<dbReference type="EMBL" id="CP001357">
    <property type="protein sequence ID" value="ACN84792.1"/>
    <property type="molecule type" value="Genomic_DNA"/>
</dbReference>
<dbReference type="STRING" id="565034.BHWA1_02338"/>
<dbReference type="KEGG" id="bhy:BHWA1_02338"/>
<dbReference type="eggNOG" id="ENOG5033RD4">
    <property type="taxonomic scope" value="Bacteria"/>
</dbReference>
<dbReference type="HOGENOM" id="CLU_097187_0_0_12"/>
<dbReference type="Proteomes" id="UP000001803">
    <property type="component" value="Chromosome"/>
</dbReference>
<dbReference type="GO" id="GO:0030288">
    <property type="term" value="C:outer membrane-bounded periplasmic space"/>
    <property type="evidence" value="ECO:0007669"/>
    <property type="project" value="InterPro"/>
</dbReference>
<dbReference type="GO" id="GO:0055040">
    <property type="term" value="C:periplasmic flagellum"/>
    <property type="evidence" value="ECO:0007669"/>
    <property type="project" value="UniProtKB-SubCell"/>
</dbReference>
<dbReference type="GO" id="GO:0071973">
    <property type="term" value="P:bacterial-type flagellum-dependent cell motility"/>
    <property type="evidence" value="ECO:0007669"/>
    <property type="project" value="InterPro"/>
</dbReference>
<dbReference type="Gene3D" id="2.60.120.430">
    <property type="entry name" value="Galactose-binding lectin"/>
    <property type="match status" value="1"/>
</dbReference>
<dbReference type="InterPro" id="IPR006714">
    <property type="entry name" value="FlaA"/>
</dbReference>
<dbReference type="Pfam" id="PF04620">
    <property type="entry name" value="FlaA"/>
    <property type="match status" value="1"/>
</dbReference>
<comment type="function">
    <text evidence="3">Might be part of the flagella.</text>
</comment>
<comment type="subcellular location">
    <subcellularLocation>
        <location>Periplasmic flagellum</location>
    </subcellularLocation>
    <subcellularLocation>
        <location evidence="3">Periplasm</location>
    </subcellularLocation>
</comment>
<comment type="biotechnology">
    <text evidence="2">Has shown promise in a 4-component vaccine with BHWA1_00430 (AC C0QY54), SecA (AC C0QZS7) and BHWA1_00569 (AC C0QYX7).</text>
</comment>
<comment type="sequence caution" evidence="3">
    <conflict type="erroneous initiation">
        <sequence resource="EMBL-CDS" id="ACD74839"/>
    </conflict>
</comment>